<proteinExistence type="evidence at transcript level"/>
<comment type="function">
    <text evidence="2 3 4 6 7 8">Part of the gene clusters that mediate the biosynthesis of AM-toxins, host-selective toxins (HSTs) causing Alternaria blotch on apple, a worldwide distributed disease (Probable). AM-toxins are cyclic depsipeptides containing the 3 residues 2-hydroxy-isovaleric acid (2-HIV), dehydroalanine, L-alanine which are common for all 3 AM-toxins I to III. The fourth precursor is L-alpha-amino-methoxyphenyl-valeric acid (L-Amv) for AM-toxin I, L-alpha-amino-phenyl-valeric acid (L-Apv) for AM-toxin II, and L-alpha-amino-hydroxyphenyl-valeric acid (L-Ahv) for AM-toxin III (Probable). AM-toxins have two target sites for affecting susceptible apple cells; they cause invagination of the plasma membrane and electrolyte loss and chloroplast disorganization (PubMed:22846083). The non-ribosomal peptide synthetase AMT1 contains 4 catalytic modules and is responsible for activation of each residue in AM-toxin (PubMed:10875335). The aldo-keto reductase AMT2 catalyzes the conversion of 2-keto-isovaleric acid (2-KIV) to 2-hydroxy-isovaleric acid (2-HIV), one of the precursor residues incorporated by AMT1 during AM-toxin biosynthesis, by reduction of its ketone to an alcohol (PubMed:15066029). The cytochrome P450 monooxygenase AMT3 and the thioesterase AMT4 are also important for AM-toxin production, but their exact function within the AM-toxin biosynthesis are not known yet (PubMed:17990954). Up to 21 proteins (including AMT1 to AMT4) are predicted to be involved in AM-toxin biosynthesis since their expression ishighly up-regulated in AM-toxin-producing cultures (PubMed:17990954).</text>
</comment>
<comment type="pathway">
    <text evidence="8">Mycotoxin biosynthesis.</text>
</comment>
<comment type="induction">
    <text evidence="4">Expression is up-regulated more than 10 fold in toxin producing cultures.</text>
</comment>
<comment type="miscellaneous">
    <text evidence="4">Gene clusters encoding host-selective toxins (HSTs) are localized on conditionally dispensable chromosomes (CDCs), also called supernumerary chromosomes, where they are present in multiple copies (PubMed:17990954). The CDCs are not essential for saprophytic growth but controls host-selective pathogenicity (PubMed:17990954).</text>
</comment>
<name>AMT15_ALTAL</name>
<protein>
    <recommendedName>
        <fullName evidence="5">AM-toxin biosynthesis protein 15</fullName>
    </recommendedName>
</protein>
<sequence>MATLLCDLQERSAKVERARHWDSKQGSSNSDVASGGSEVAGNSGNNSYLGDDVGWKIYPYRFLQLLQHLEQLQFTIQAPRHARLGISTVRMWSLRPYYNYDSYLEKDLIQPDVPHDSLIWALLRYVGRAVDRWVSRTFQPPRIRPLHANDPPAEASL</sequence>
<keyword id="KW-0843">Virulence</keyword>
<gene>
    <name evidence="5" type="primary">AMT15</name>
</gene>
<accession>C9K7C7</accession>
<dbReference type="EMBL" id="AB525198">
    <property type="protein sequence ID" value="BAI44751.1"/>
    <property type="molecule type" value="Genomic_DNA"/>
</dbReference>
<dbReference type="EMBL" id="AB525199">
    <property type="protein sequence ID" value="BAI44774.1"/>
    <property type="molecule type" value="Genomic_DNA"/>
</dbReference>
<reference key="1">
    <citation type="journal article" date="2007" name="Mol. Plant Microbe Interact.">
        <title>Expression profiles of genes encoded by the supernumerary chromosome controlling AM-toxin biosynthesis and pathogenicity in the apple pathotype of Alternaria alternata.</title>
        <authorList>
            <person name="Harimoto Y."/>
            <person name="Hatta R."/>
            <person name="Kodama M."/>
            <person name="Yamamoto M."/>
            <person name="Otani H."/>
            <person name="Tsuge T."/>
        </authorList>
    </citation>
    <scope>NUCLEOTIDE SEQUENCE [GENOMIC DNA]</scope>
    <scope>INDUCTION</scope>
    <scope>PATHWAY</scope>
    <source>
        <strain>NBRC 8984</strain>
    </source>
</reference>
<reference key="2">
    <citation type="journal article" date="2000" name="Mol. Plant Microbe Interact.">
        <title>Cloning and characterization of a cyclic peptide synthetase gene from Alternaria alternata apple pathotype whose product is involved in AM-toxin synthesis and pathogenicity.</title>
        <authorList>
            <person name="Johnson R.D."/>
            <person name="Johnson L."/>
            <person name="Itoh Y."/>
            <person name="Kodama M."/>
            <person name="Otani H."/>
            <person name="Kohmoto K."/>
        </authorList>
    </citation>
    <scope>FUNCTION</scope>
    <source>
        <strain>M-71</strain>
    </source>
</reference>
<reference key="3">
    <citation type="journal article" date="2004" name="Mol. Microbiol.">
        <title>Dissection of the host range of the fungal plant pathogen Alternaria alternata by modification of secondary metabolism.</title>
        <authorList>
            <person name="Ito K."/>
            <person name="Tanaka T."/>
            <person name="Hatta R."/>
            <person name="Yamamoto M."/>
            <person name="Akimitsu K."/>
            <person name="Tsuge T."/>
        </authorList>
    </citation>
    <scope>FUNCTION</scope>
    <source>
        <strain>NBRC 8984</strain>
    </source>
</reference>
<reference key="4">
    <citation type="journal article" date="2013" name="FEMS Microbiol. Rev.">
        <title>Host-selective toxins produced by the plant pathogenic fungus Alternaria alternata.</title>
        <authorList>
            <person name="Tsuge T."/>
            <person name="Harimoto Y."/>
            <person name="Akimitsu K."/>
            <person name="Ohtani K."/>
            <person name="Kodama M."/>
            <person name="Akagi Y."/>
            <person name="Egusa M."/>
            <person name="Yamamoto M."/>
            <person name="Otani H."/>
        </authorList>
    </citation>
    <scope>REVIEW ON HOST-SELECTIVE TOXINS</scope>
</reference>
<evidence type="ECO:0000256" key="1">
    <source>
        <dbReference type="SAM" id="MobiDB-lite"/>
    </source>
</evidence>
<evidence type="ECO:0000269" key="2">
    <source>
    </source>
</evidence>
<evidence type="ECO:0000269" key="3">
    <source>
    </source>
</evidence>
<evidence type="ECO:0000269" key="4">
    <source>
    </source>
</evidence>
<evidence type="ECO:0000303" key="5">
    <source>
    </source>
</evidence>
<evidence type="ECO:0000303" key="6">
    <source>
    </source>
</evidence>
<evidence type="ECO:0000305" key="7">
    <source>
    </source>
</evidence>
<evidence type="ECO:0000305" key="8">
    <source>
    </source>
</evidence>
<feature type="chain" id="PRO_0000444849" description="AM-toxin biosynthesis protein 15">
    <location>
        <begin position="1"/>
        <end position="157"/>
    </location>
</feature>
<feature type="region of interest" description="Disordered" evidence="1">
    <location>
        <begin position="17"/>
        <end position="43"/>
    </location>
</feature>
<organism>
    <name type="scientific">Alternaria alternata</name>
    <name type="common">Alternaria rot fungus</name>
    <name type="synonym">Torula alternata</name>
    <dbReference type="NCBI Taxonomy" id="5599"/>
    <lineage>
        <taxon>Eukaryota</taxon>
        <taxon>Fungi</taxon>
        <taxon>Dikarya</taxon>
        <taxon>Ascomycota</taxon>
        <taxon>Pezizomycotina</taxon>
        <taxon>Dothideomycetes</taxon>
        <taxon>Pleosporomycetidae</taxon>
        <taxon>Pleosporales</taxon>
        <taxon>Pleosporineae</taxon>
        <taxon>Pleosporaceae</taxon>
        <taxon>Alternaria</taxon>
        <taxon>Alternaria sect. Alternaria</taxon>
        <taxon>Alternaria alternata complex</taxon>
    </lineage>
</organism>